<name>RS12_MYCS5</name>
<evidence type="ECO:0000250" key="1"/>
<evidence type="ECO:0000255" key="2">
    <source>
        <dbReference type="HAMAP-Rule" id="MF_00403"/>
    </source>
</evidence>
<evidence type="ECO:0000256" key="3">
    <source>
        <dbReference type="SAM" id="MobiDB-lite"/>
    </source>
</evidence>
<evidence type="ECO:0000305" key="4"/>
<gene>
    <name evidence="2" type="primary">rpsL</name>
    <name type="ordered locus">MS53_0049</name>
</gene>
<sequence length="137" mass="15371">MPTTNQLVNRGRTSKVQKQNAPALSWSYNSLIKRSKKMPSPFKRGVCTRVATMTPKKPNSALRKFARVKLSNGMEVTAYIPGEKHNIQEHSVVLIRGGRVKDLPGVRYHIVRGTQDVAGVNNRKQGRSLYGTKKDKK</sequence>
<keyword id="KW-0488">Methylation</keyword>
<keyword id="KW-1185">Reference proteome</keyword>
<keyword id="KW-0687">Ribonucleoprotein</keyword>
<keyword id="KW-0689">Ribosomal protein</keyword>
<keyword id="KW-0694">RNA-binding</keyword>
<keyword id="KW-0699">rRNA-binding</keyword>
<keyword id="KW-0820">tRNA-binding</keyword>
<proteinExistence type="inferred from homology"/>
<feature type="chain" id="PRO_0000226396" description="Small ribosomal subunit protein uS12">
    <location>
        <begin position="1"/>
        <end position="137"/>
    </location>
</feature>
<feature type="region of interest" description="Disordered" evidence="3">
    <location>
        <begin position="1"/>
        <end position="20"/>
    </location>
</feature>
<feature type="modified residue" description="3-methylthioaspartic acid" evidence="1">
    <location>
        <position position="102"/>
    </location>
</feature>
<comment type="function">
    <text evidence="2">With S4 and S5 plays an important role in translational accuracy.</text>
</comment>
<comment type="function">
    <text evidence="2">Interacts with and stabilizes bases of the 16S rRNA that are involved in tRNA selection in the A site and with the mRNA backbone. Located at the interface of the 30S and 50S subunits, it traverses the body of the 30S subunit contacting proteins on the other side and probably holding the rRNA structure together. The combined cluster of proteins S8, S12 and S17 appears to hold together the shoulder and platform of the 30S subunit.</text>
</comment>
<comment type="subunit">
    <text evidence="2">Part of the 30S ribosomal subunit. Contacts proteins S8 and S17. May interact with IF1 in the 30S initiation complex.</text>
</comment>
<comment type="similarity">
    <text evidence="2">Belongs to the universal ribosomal protein uS12 family.</text>
</comment>
<organism>
    <name type="scientific">Mycoplasmopsis synoviae (strain 53)</name>
    <name type="common">Mycoplasma synoviae</name>
    <dbReference type="NCBI Taxonomy" id="262723"/>
    <lineage>
        <taxon>Bacteria</taxon>
        <taxon>Bacillati</taxon>
        <taxon>Mycoplasmatota</taxon>
        <taxon>Mycoplasmoidales</taxon>
        <taxon>Metamycoplasmataceae</taxon>
        <taxon>Mycoplasmopsis</taxon>
    </lineage>
</organism>
<reference key="1">
    <citation type="journal article" date="2005" name="J. Bacteriol.">
        <title>Swine and poultry pathogens: the complete genome sequences of two strains of Mycoplasma hyopneumoniae and a strain of Mycoplasma synoviae.</title>
        <authorList>
            <person name="Vasconcelos A.T.R."/>
            <person name="Ferreira H.B."/>
            <person name="Bizarro C.V."/>
            <person name="Bonatto S.L."/>
            <person name="Carvalho M.O."/>
            <person name="Pinto P.M."/>
            <person name="Almeida D.F."/>
            <person name="Almeida L.G.P."/>
            <person name="Almeida R."/>
            <person name="Alves-Junior L."/>
            <person name="Assuncao E.N."/>
            <person name="Azevedo V.A.C."/>
            <person name="Bogo M.R."/>
            <person name="Brigido M.M."/>
            <person name="Brocchi M."/>
            <person name="Burity H.A."/>
            <person name="Camargo A.A."/>
            <person name="Camargo S.S."/>
            <person name="Carepo M.S."/>
            <person name="Carraro D.M."/>
            <person name="de Mattos Cascardo J.C."/>
            <person name="Castro L.A."/>
            <person name="Cavalcanti G."/>
            <person name="Chemale G."/>
            <person name="Collevatti R.G."/>
            <person name="Cunha C.W."/>
            <person name="Dallagiovanna B."/>
            <person name="Dambros B.P."/>
            <person name="Dellagostin O.A."/>
            <person name="Falcao C."/>
            <person name="Fantinatti-Garboggini F."/>
            <person name="Felipe M.S.S."/>
            <person name="Fiorentin L."/>
            <person name="Franco G.R."/>
            <person name="Freitas N.S.A."/>
            <person name="Frias D."/>
            <person name="Grangeiro T.B."/>
            <person name="Grisard E.C."/>
            <person name="Guimaraes C.T."/>
            <person name="Hungria M."/>
            <person name="Jardim S.N."/>
            <person name="Krieger M.A."/>
            <person name="Laurino J.P."/>
            <person name="Lima L.F.A."/>
            <person name="Lopes M.I."/>
            <person name="Loreto E.L.S."/>
            <person name="Madeira H.M.F."/>
            <person name="Manfio G.P."/>
            <person name="Maranhao A.Q."/>
            <person name="Martinkovics C.T."/>
            <person name="Medeiros S.R.B."/>
            <person name="Moreira M.A.M."/>
            <person name="Neiva M."/>
            <person name="Ramalho-Neto C.E."/>
            <person name="Nicolas M.F."/>
            <person name="Oliveira S.C."/>
            <person name="Paixao R.F.C."/>
            <person name="Pedrosa F.O."/>
            <person name="Pena S.D.J."/>
            <person name="Pereira M."/>
            <person name="Pereira-Ferrari L."/>
            <person name="Piffer I."/>
            <person name="Pinto L.S."/>
            <person name="Potrich D.P."/>
            <person name="Salim A.C.M."/>
            <person name="Santos F.R."/>
            <person name="Schmitt R."/>
            <person name="Schneider M.P.C."/>
            <person name="Schrank A."/>
            <person name="Schrank I.S."/>
            <person name="Schuck A.F."/>
            <person name="Seuanez H.N."/>
            <person name="Silva D.W."/>
            <person name="Silva R."/>
            <person name="Silva S.C."/>
            <person name="Soares C.M.A."/>
            <person name="Souza K.R.L."/>
            <person name="Souza R.C."/>
            <person name="Staats C.C."/>
            <person name="Steffens M.B.R."/>
            <person name="Teixeira S.M.R."/>
            <person name="Urmenyi T.P."/>
            <person name="Vainstein M.H."/>
            <person name="Zuccherato L.W."/>
            <person name="Simpson A.J.G."/>
            <person name="Zaha A."/>
        </authorList>
    </citation>
    <scope>NUCLEOTIDE SEQUENCE [LARGE SCALE GENOMIC DNA]</scope>
    <source>
        <strain>53</strain>
    </source>
</reference>
<accession>Q4A701</accession>
<dbReference type="EMBL" id="AE017245">
    <property type="protein sequence ID" value="AAZ43470.1"/>
    <property type="molecule type" value="Genomic_DNA"/>
</dbReference>
<dbReference type="RefSeq" id="WP_011283213.1">
    <property type="nucleotide sequence ID" value="NC_007294.1"/>
</dbReference>
<dbReference type="SMR" id="Q4A701"/>
<dbReference type="STRING" id="262723.MS53_0049"/>
<dbReference type="GeneID" id="93529858"/>
<dbReference type="KEGG" id="msy:MS53_0049"/>
<dbReference type="eggNOG" id="COG0048">
    <property type="taxonomic scope" value="Bacteria"/>
</dbReference>
<dbReference type="HOGENOM" id="CLU_104295_1_2_14"/>
<dbReference type="OrthoDB" id="9802366at2"/>
<dbReference type="Proteomes" id="UP000000549">
    <property type="component" value="Chromosome"/>
</dbReference>
<dbReference type="GO" id="GO:0015935">
    <property type="term" value="C:small ribosomal subunit"/>
    <property type="evidence" value="ECO:0007669"/>
    <property type="project" value="InterPro"/>
</dbReference>
<dbReference type="GO" id="GO:0019843">
    <property type="term" value="F:rRNA binding"/>
    <property type="evidence" value="ECO:0007669"/>
    <property type="project" value="UniProtKB-UniRule"/>
</dbReference>
<dbReference type="GO" id="GO:0003735">
    <property type="term" value="F:structural constituent of ribosome"/>
    <property type="evidence" value="ECO:0007669"/>
    <property type="project" value="InterPro"/>
</dbReference>
<dbReference type="GO" id="GO:0000049">
    <property type="term" value="F:tRNA binding"/>
    <property type="evidence" value="ECO:0007669"/>
    <property type="project" value="UniProtKB-UniRule"/>
</dbReference>
<dbReference type="GO" id="GO:0006412">
    <property type="term" value="P:translation"/>
    <property type="evidence" value="ECO:0007669"/>
    <property type="project" value="UniProtKB-UniRule"/>
</dbReference>
<dbReference type="CDD" id="cd03368">
    <property type="entry name" value="Ribosomal_S12"/>
    <property type="match status" value="1"/>
</dbReference>
<dbReference type="FunFam" id="2.40.50.140:FF:000099">
    <property type="entry name" value="Ribosomal protein S12, mitochondrial"/>
    <property type="match status" value="1"/>
</dbReference>
<dbReference type="Gene3D" id="2.40.50.140">
    <property type="entry name" value="Nucleic acid-binding proteins"/>
    <property type="match status" value="1"/>
</dbReference>
<dbReference type="HAMAP" id="MF_00403_B">
    <property type="entry name" value="Ribosomal_uS12_B"/>
    <property type="match status" value="1"/>
</dbReference>
<dbReference type="InterPro" id="IPR012340">
    <property type="entry name" value="NA-bd_OB-fold"/>
</dbReference>
<dbReference type="InterPro" id="IPR006032">
    <property type="entry name" value="Ribosomal_uS12"/>
</dbReference>
<dbReference type="InterPro" id="IPR005679">
    <property type="entry name" value="Ribosomal_uS12_bac"/>
</dbReference>
<dbReference type="NCBIfam" id="TIGR00981">
    <property type="entry name" value="rpsL_bact"/>
    <property type="match status" value="1"/>
</dbReference>
<dbReference type="PANTHER" id="PTHR11652">
    <property type="entry name" value="30S RIBOSOMAL PROTEIN S12 FAMILY MEMBER"/>
    <property type="match status" value="1"/>
</dbReference>
<dbReference type="Pfam" id="PF00164">
    <property type="entry name" value="Ribosom_S12_S23"/>
    <property type="match status" value="1"/>
</dbReference>
<dbReference type="PRINTS" id="PR01034">
    <property type="entry name" value="RIBOSOMALS12"/>
</dbReference>
<dbReference type="SUPFAM" id="SSF50249">
    <property type="entry name" value="Nucleic acid-binding proteins"/>
    <property type="match status" value="1"/>
</dbReference>
<dbReference type="PROSITE" id="PS00055">
    <property type="entry name" value="RIBOSOMAL_S12"/>
    <property type="match status" value="1"/>
</dbReference>
<protein>
    <recommendedName>
        <fullName evidence="2">Small ribosomal subunit protein uS12</fullName>
    </recommendedName>
    <alternativeName>
        <fullName evidence="4">30S ribosomal protein S12</fullName>
    </alternativeName>
</protein>